<gene>
    <name type="ORF">ORF2a</name>
</gene>
<accession>Q83265</accession>
<name>RDRP_CMVY</name>
<sequence length="857" mass="96816">MAFPAPAFSLANLLNGSYGVDTPEDVERLRSEQREEAAAACRNYRPLPAVDVSESVTEDAHSLRTPDGAPAEAVSDEFVTYGAEDYLEKSDDELLVAFETMVKPMRIGQLWCPAFNKCSFISSIAMARALLLAPRTSHRTMKCFEDLVAAIYTKSDFYYSEECEADDAQIDISSRDVPGYSFEPWSRTSGFEPPPICEACDMIMYQCPCFDFNALKKSCAERTFADDYVIEGLDGVVDNATLLSNLGPFLVPVKCQYEKCPTPTIAIPPDLNRATDRVDINLVQSICDSTLPTHSNYDDSFHQVFVESADYSIDLDHVRLRQSDLIAKIPDSGHMIPVLNTGSGHKRVGTTKEVLTAIKKRNADVPELGDSVNLSRLSKAVAERFFISYINGNSLASSNFVNVVSNFHDYMEKWKSSGLSYDDLPDLHAENLQFYDHMIKSDVKPVVSDTLNIDRPVPATITYHKKSITSQFSPLFTALFERFQRCLRERIILPVGKISSLEMAGFDVKNKHCLEIDLSKFDKSQGEFHLLIQEHILNGLGCPAPITKWWCDFHRFSYIRDRRAGVGMPISFQRRTGDAFTYFGNTIVTMAEFAWCYDTDQFEKLLFSGDDSLGFSLLPPVGDPSKFTTLFNMEAKVMEPAVPYICSKFLLSDEFGNTFSVPDPLREVQRLGTKKIPYSDNDEFLFAHFMSFVDRLKFLDRMSQSCIDQLSIFFELKYKKSGEEAALMLGAFKKYTANFQSYKELYYSDRRQCELINSFCSTEFRVERVNSNKQRKKYGIERRCNDKRRTPTGSYGGGEEAETKVSQTESTGTRSQKSQRESAFKSQTVPLPTVLSSRWFGTDRVMPPCERGGVTRA</sequence>
<keyword id="KW-0547">Nucleotide-binding</keyword>
<keyword id="KW-0548">Nucleotidyltransferase</keyword>
<keyword id="KW-0696">RNA-directed RNA polymerase</keyword>
<keyword id="KW-0808">Transferase</keyword>
<keyword id="KW-0693">Viral RNA replication</keyword>
<comment type="function">
    <text evidence="4">RNA-dependent RNA polymerase which replicates the viral genome composed of 3 RNA segments, RNA1, RNA2 and RNA3.</text>
</comment>
<comment type="catalytic activity">
    <reaction evidence="2">
        <text>RNA(n) + a ribonucleoside 5'-triphosphate = RNA(n+1) + diphosphate</text>
        <dbReference type="Rhea" id="RHEA:21248"/>
        <dbReference type="Rhea" id="RHEA-COMP:14527"/>
        <dbReference type="Rhea" id="RHEA-COMP:17342"/>
        <dbReference type="ChEBI" id="CHEBI:33019"/>
        <dbReference type="ChEBI" id="CHEBI:61557"/>
        <dbReference type="ChEBI" id="CHEBI:140395"/>
        <dbReference type="EC" id="2.7.7.48"/>
    </reaction>
</comment>
<comment type="subunit">
    <text evidence="1">Interacts with replication protein 1a.</text>
</comment>
<comment type="similarity">
    <text evidence="4">Belongs to the ssRNA positive-strand viruses RNA-directed RNA polymerase family.</text>
</comment>
<proteinExistence type="inferred from homology"/>
<organismHost>
    <name type="scientific">Cucumis sativus</name>
    <name type="common">Cucumber</name>
    <dbReference type="NCBI Taxonomy" id="3659"/>
</organismHost>
<organismHost>
    <name type="scientific">Nicotiana tabacum</name>
    <name type="common">Common tobacco</name>
    <dbReference type="NCBI Taxonomy" id="4097"/>
</organismHost>
<organismHost>
    <name type="scientific">Solanum lycopersicum</name>
    <name type="common">Tomato</name>
    <name type="synonym">Lycopersicon esculentum</name>
    <dbReference type="NCBI Taxonomy" id="4081"/>
</organismHost>
<evidence type="ECO:0000250" key="1"/>
<evidence type="ECO:0000255" key="2">
    <source>
        <dbReference type="PROSITE-ProRule" id="PRU00539"/>
    </source>
</evidence>
<evidence type="ECO:0000256" key="3">
    <source>
        <dbReference type="SAM" id="MobiDB-lite"/>
    </source>
</evidence>
<evidence type="ECO:0000305" key="4"/>
<protein>
    <recommendedName>
        <fullName>RNA-directed RNA polymerase 2a</fullName>
        <shortName>protein 2a</shortName>
        <ecNumber>2.7.7.48</ecNumber>
    </recommendedName>
</protein>
<organism>
    <name type="scientific">Cucumber mosaic virus (strain Y)</name>
    <name type="common">CMV</name>
    <dbReference type="NCBI Taxonomy" id="12312"/>
    <lineage>
        <taxon>Viruses</taxon>
        <taxon>Riboviria</taxon>
        <taxon>Orthornavirae</taxon>
        <taxon>Kitrinoviricota</taxon>
        <taxon>Alsuviricetes</taxon>
        <taxon>Martellivirales</taxon>
        <taxon>Bromoviridae</taxon>
        <taxon>Cucumovirus</taxon>
        <taxon>Cucumber mosaic virus</taxon>
    </lineage>
</organism>
<dbReference type="EC" id="2.7.7.48"/>
<dbReference type="EMBL" id="D12538">
    <property type="protein sequence ID" value="BAA02106.1"/>
    <property type="molecule type" value="Genomic_RNA"/>
</dbReference>
<dbReference type="PIR" id="JQ2219">
    <property type="entry name" value="JQ2219"/>
</dbReference>
<dbReference type="GO" id="GO:0000166">
    <property type="term" value="F:nucleotide binding"/>
    <property type="evidence" value="ECO:0007669"/>
    <property type="project" value="UniProtKB-KW"/>
</dbReference>
<dbReference type="GO" id="GO:0003723">
    <property type="term" value="F:RNA binding"/>
    <property type="evidence" value="ECO:0007669"/>
    <property type="project" value="InterPro"/>
</dbReference>
<dbReference type="GO" id="GO:0003968">
    <property type="term" value="F:RNA-directed RNA polymerase activity"/>
    <property type="evidence" value="ECO:0007669"/>
    <property type="project" value="UniProtKB-KW"/>
</dbReference>
<dbReference type="GO" id="GO:0006351">
    <property type="term" value="P:DNA-templated transcription"/>
    <property type="evidence" value="ECO:0007669"/>
    <property type="project" value="InterPro"/>
</dbReference>
<dbReference type="GO" id="GO:0039690">
    <property type="term" value="P:positive stranded viral RNA replication"/>
    <property type="evidence" value="ECO:0007669"/>
    <property type="project" value="InterPro"/>
</dbReference>
<dbReference type="CDD" id="cd23252">
    <property type="entry name" value="Bromoviridae_RdRp"/>
    <property type="match status" value="1"/>
</dbReference>
<dbReference type="InterPro" id="IPR047309">
    <property type="entry name" value="Bromoviridae_RdRp"/>
</dbReference>
<dbReference type="InterPro" id="IPR043502">
    <property type="entry name" value="DNA/RNA_pol_sf"/>
</dbReference>
<dbReference type="InterPro" id="IPR001788">
    <property type="entry name" value="RNA-dep_RNA_pol_alsuvir"/>
</dbReference>
<dbReference type="InterPro" id="IPR007094">
    <property type="entry name" value="RNA-dir_pol_PSvirus"/>
</dbReference>
<dbReference type="Pfam" id="PF00978">
    <property type="entry name" value="RdRP_2"/>
    <property type="match status" value="1"/>
</dbReference>
<dbReference type="SUPFAM" id="SSF56672">
    <property type="entry name" value="DNA/RNA polymerases"/>
    <property type="match status" value="1"/>
</dbReference>
<dbReference type="PROSITE" id="PS50507">
    <property type="entry name" value="RDRP_SSRNA_POS"/>
    <property type="match status" value="1"/>
</dbReference>
<reference key="1">
    <citation type="journal article" date="1990" name="Nihon Shokubutsu Byori Gakkaiho">
        <title>Complete nucleotide sequence of RNA2 of cucumber mosaic virus Y strain.</title>
        <authorList>
            <person name="Kataoka J."/>
            <person name="Masuta C."/>
            <person name="Takanami Y."/>
        </authorList>
    </citation>
    <scope>NUCLEOTIDE SEQUENCE [GENOMIC RNA]</scope>
</reference>
<feature type="chain" id="PRO_0000083281" description="RNA-directed RNA polymerase 2a">
    <location>
        <begin position="1"/>
        <end position="857"/>
    </location>
</feature>
<feature type="domain" description="RdRp catalytic" evidence="2">
    <location>
        <begin position="511"/>
        <end position="624"/>
    </location>
</feature>
<feature type="region of interest" description="Disordered" evidence="3">
    <location>
        <begin position="780"/>
        <end position="829"/>
    </location>
</feature>
<feature type="compositionally biased region" description="Basic and acidic residues" evidence="3">
    <location>
        <begin position="780"/>
        <end position="789"/>
    </location>
</feature>
<feature type="compositionally biased region" description="Polar residues" evidence="3">
    <location>
        <begin position="804"/>
        <end position="816"/>
    </location>
</feature>